<dbReference type="EMBL" id="AP003256">
    <property type="protein sequence ID" value="BAB61213.1"/>
    <property type="status" value="ALT_SEQ"/>
    <property type="molecule type" value="Genomic_DNA"/>
</dbReference>
<dbReference type="EMBL" id="AP003274">
    <property type="protein sequence ID" value="BAD87345.1"/>
    <property type="molecule type" value="Genomic_DNA"/>
</dbReference>
<dbReference type="EMBL" id="AP008207">
    <property type="protein sequence ID" value="BAF06233.1"/>
    <property type="molecule type" value="Genomic_DNA"/>
</dbReference>
<dbReference type="EMBL" id="AP014957">
    <property type="protein sequence ID" value="BAS74453.1"/>
    <property type="molecule type" value="Genomic_DNA"/>
</dbReference>
<dbReference type="EMBL" id="AK107573">
    <property type="protein sequence ID" value="BAG98096.1"/>
    <property type="molecule type" value="mRNA"/>
</dbReference>
<dbReference type="RefSeq" id="XP_015644351.1">
    <property type="nucleotide sequence ID" value="XM_015788865.1"/>
</dbReference>
<dbReference type="SMR" id="Q5JMF2"/>
<dbReference type="FunCoup" id="Q5JMF2">
    <property type="interactions" value="8"/>
</dbReference>
<dbReference type="STRING" id="39947.Q5JMF2"/>
<dbReference type="PaxDb" id="39947-Q5JMF2"/>
<dbReference type="EnsemblPlants" id="Os01t0760900-01">
    <property type="protein sequence ID" value="Os01t0760900-01"/>
    <property type="gene ID" value="Os01g0760900"/>
</dbReference>
<dbReference type="Gramene" id="Os01t0760900-01">
    <property type="protein sequence ID" value="Os01t0760900-01"/>
    <property type="gene ID" value="Os01g0760900"/>
</dbReference>
<dbReference type="KEGG" id="dosa:Os01g0760900"/>
<dbReference type="eggNOG" id="ENOG502RYI5">
    <property type="taxonomic scope" value="Eukaryota"/>
</dbReference>
<dbReference type="HOGENOM" id="CLU_078087_0_0_1"/>
<dbReference type="InParanoid" id="Q5JMF2"/>
<dbReference type="OMA" id="HRKKANH"/>
<dbReference type="OrthoDB" id="2159336at2759"/>
<dbReference type="Proteomes" id="UP000000763">
    <property type="component" value="Chromosome 1"/>
</dbReference>
<dbReference type="Proteomes" id="UP000059680">
    <property type="component" value="Chromosome 1"/>
</dbReference>
<dbReference type="GO" id="GO:0005737">
    <property type="term" value="C:cytoplasm"/>
    <property type="evidence" value="ECO:0007669"/>
    <property type="project" value="UniProtKB-KW"/>
</dbReference>
<dbReference type="GO" id="GO:0005856">
    <property type="term" value="C:cytoskeleton"/>
    <property type="evidence" value="ECO:0007669"/>
    <property type="project" value="UniProtKB-SubCell"/>
</dbReference>
<dbReference type="Gene3D" id="6.10.140.1620">
    <property type="match status" value="1"/>
</dbReference>
<dbReference type="InterPro" id="IPR028457">
    <property type="entry name" value="ABI"/>
</dbReference>
<dbReference type="PANTHER" id="PTHR10460">
    <property type="entry name" value="ABL INTERACTOR FAMILY MEMBER"/>
    <property type="match status" value="1"/>
</dbReference>
<dbReference type="PANTHER" id="PTHR10460:SF11">
    <property type="entry name" value="PROTEIN ABIL5-RELATED"/>
    <property type="match status" value="1"/>
</dbReference>
<proteinExistence type="evidence at transcript level"/>
<evidence type="ECO:0000250" key="1"/>
<evidence type="ECO:0000256" key="2">
    <source>
        <dbReference type="SAM" id="MobiDB-lite"/>
    </source>
</evidence>
<evidence type="ECO:0000305" key="3"/>
<protein>
    <recommendedName>
        <fullName>Probable protein ABIL5</fullName>
    </recommendedName>
    <alternativeName>
        <fullName>Abl interactor-like protein 5</fullName>
    </alternativeName>
</protein>
<sequence>MEVAEAGVDGVAGRRQQEEASGAAPFGRSSSLIGAAGFDGALRELKDLRSQLHQTADCCEKAFLDTEKKKLILESTKGYICDAIVAVIDHLGTVSSKLEQQLQEKIEITQTEKKLNFLKQRLLTCEQYAITLKLLTVRGDNDAIQYHRRYLSQSTGGTKEENGANSRKDDVKFVEYNSPTIPGAILTFKPYDIQSTIGRERSVATTDSESPTTDAKSSFSFRAEDVPIVLAEHRKKANHGSNILSFIRKGRRHA</sequence>
<reference key="1">
    <citation type="journal article" date="2002" name="Nature">
        <title>The genome sequence and structure of rice chromosome 1.</title>
        <authorList>
            <person name="Sasaki T."/>
            <person name="Matsumoto T."/>
            <person name="Yamamoto K."/>
            <person name="Sakata K."/>
            <person name="Baba T."/>
            <person name="Katayose Y."/>
            <person name="Wu J."/>
            <person name="Niimura Y."/>
            <person name="Cheng Z."/>
            <person name="Nagamura Y."/>
            <person name="Antonio B.A."/>
            <person name="Kanamori H."/>
            <person name="Hosokawa S."/>
            <person name="Masukawa M."/>
            <person name="Arikawa K."/>
            <person name="Chiden Y."/>
            <person name="Hayashi M."/>
            <person name="Okamoto M."/>
            <person name="Ando T."/>
            <person name="Aoki H."/>
            <person name="Arita K."/>
            <person name="Hamada M."/>
            <person name="Harada C."/>
            <person name="Hijishita S."/>
            <person name="Honda M."/>
            <person name="Ichikawa Y."/>
            <person name="Idonuma A."/>
            <person name="Iijima M."/>
            <person name="Ikeda M."/>
            <person name="Ikeno M."/>
            <person name="Ito S."/>
            <person name="Ito T."/>
            <person name="Ito Y."/>
            <person name="Ito Y."/>
            <person name="Iwabuchi A."/>
            <person name="Kamiya K."/>
            <person name="Karasawa W."/>
            <person name="Katagiri S."/>
            <person name="Kikuta A."/>
            <person name="Kobayashi N."/>
            <person name="Kono I."/>
            <person name="Machita K."/>
            <person name="Maehara T."/>
            <person name="Mizuno H."/>
            <person name="Mizubayashi T."/>
            <person name="Mukai Y."/>
            <person name="Nagasaki H."/>
            <person name="Nakashima M."/>
            <person name="Nakama Y."/>
            <person name="Nakamichi Y."/>
            <person name="Nakamura M."/>
            <person name="Namiki N."/>
            <person name="Negishi M."/>
            <person name="Ohta I."/>
            <person name="Ono N."/>
            <person name="Saji S."/>
            <person name="Sakai K."/>
            <person name="Shibata M."/>
            <person name="Shimokawa T."/>
            <person name="Shomura A."/>
            <person name="Song J."/>
            <person name="Takazaki Y."/>
            <person name="Terasawa K."/>
            <person name="Tsuji K."/>
            <person name="Waki K."/>
            <person name="Yamagata H."/>
            <person name="Yamane H."/>
            <person name="Yoshiki S."/>
            <person name="Yoshihara R."/>
            <person name="Yukawa K."/>
            <person name="Zhong H."/>
            <person name="Iwama H."/>
            <person name="Endo T."/>
            <person name="Ito H."/>
            <person name="Hahn J.H."/>
            <person name="Kim H.-I."/>
            <person name="Eun M.-Y."/>
            <person name="Yano M."/>
            <person name="Jiang J."/>
            <person name="Gojobori T."/>
        </authorList>
    </citation>
    <scope>NUCLEOTIDE SEQUENCE [LARGE SCALE GENOMIC DNA]</scope>
    <source>
        <strain>cv. Nipponbare</strain>
    </source>
</reference>
<reference key="2">
    <citation type="journal article" date="2005" name="Nature">
        <title>The map-based sequence of the rice genome.</title>
        <authorList>
            <consortium name="International rice genome sequencing project (IRGSP)"/>
        </authorList>
    </citation>
    <scope>NUCLEOTIDE SEQUENCE [LARGE SCALE GENOMIC DNA]</scope>
    <source>
        <strain>cv. Nipponbare</strain>
    </source>
</reference>
<reference key="3">
    <citation type="journal article" date="2008" name="Nucleic Acids Res.">
        <title>The rice annotation project database (RAP-DB): 2008 update.</title>
        <authorList>
            <consortium name="The rice annotation project (RAP)"/>
        </authorList>
    </citation>
    <scope>GENOME REANNOTATION</scope>
    <source>
        <strain>cv. Nipponbare</strain>
    </source>
</reference>
<reference key="4">
    <citation type="journal article" date="2013" name="Rice">
        <title>Improvement of the Oryza sativa Nipponbare reference genome using next generation sequence and optical map data.</title>
        <authorList>
            <person name="Kawahara Y."/>
            <person name="de la Bastide M."/>
            <person name="Hamilton J.P."/>
            <person name="Kanamori H."/>
            <person name="McCombie W.R."/>
            <person name="Ouyang S."/>
            <person name="Schwartz D.C."/>
            <person name="Tanaka T."/>
            <person name="Wu J."/>
            <person name="Zhou S."/>
            <person name="Childs K.L."/>
            <person name="Davidson R.M."/>
            <person name="Lin H."/>
            <person name="Quesada-Ocampo L."/>
            <person name="Vaillancourt B."/>
            <person name="Sakai H."/>
            <person name="Lee S.S."/>
            <person name="Kim J."/>
            <person name="Numa H."/>
            <person name="Itoh T."/>
            <person name="Buell C.R."/>
            <person name="Matsumoto T."/>
        </authorList>
    </citation>
    <scope>GENOME REANNOTATION</scope>
    <source>
        <strain>cv. Nipponbare</strain>
    </source>
</reference>
<reference key="5">
    <citation type="journal article" date="2003" name="Science">
        <title>Collection, mapping, and annotation of over 28,000 cDNA clones from japonica rice.</title>
        <authorList>
            <consortium name="The rice full-length cDNA consortium"/>
        </authorList>
    </citation>
    <scope>NUCLEOTIDE SEQUENCE [LARGE SCALE MRNA]</scope>
    <source>
        <strain>cv. Nipponbare</strain>
    </source>
</reference>
<comment type="function">
    <text evidence="1">Involved in regulation of actin and microtubule organization. Part of a WAVE complex that activates the Arp2/3 complex (By similarity).</text>
</comment>
<comment type="subunit">
    <text evidence="1">Binds SCAR.</text>
</comment>
<comment type="subcellular location">
    <subcellularLocation>
        <location evidence="1">Cytoplasm</location>
        <location evidence="1">Cytoskeleton</location>
    </subcellularLocation>
</comment>
<comment type="similarity">
    <text evidence="3">Belongs to the ABI family.</text>
</comment>
<comment type="sequence caution" evidence="3">
    <conflict type="erroneous gene model prediction">
        <sequence resource="EMBL-CDS" id="BAB61213"/>
    </conflict>
</comment>
<name>ABIL5_ORYSJ</name>
<organism>
    <name type="scientific">Oryza sativa subsp. japonica</name>
    <name type="common">Rice</name>
    <dbReference type="NCBI Taxonomy" id="39947"/>
    <lineage>
        <taxon>Eukaryota</taxon>
        <taxon>Viridiplantae</taxon>
        <taxon>Streptophyta</taxon>
        <taxon>Embryophyta</taxon>
        <taxon>Tracheophyta</taxon>
        <taxon>Spermatophyta</taxon>
        <taxon>Magnoliopsida</taxon>
        <taxon>Liliopsida</taxon>
        <taxon>Poales</taxon>
        <taxon>Poaceae</taxon>
        <taxon>BOP clade</taxon>
        <taxon>Oryzoideae</taxon>
        <taxon>Oryzeae</taxon>
        <taxon>Oryzinae</taxon>
        <taxon>Oryza</taxon>
        <taxon>Oryza sativa</taxon>
    </lineage>
</organism>
<keyword id="KW-0963">Cytoplasm</keyword>
<keyword id="KW-0206">Cytoskeleton</keyword>
<keyword id="KW-1185">Reference proteome</keyword>
<gene>
    <name type="ordered locus">Os01g0760900</name>
    <name type="ordered locus">LOC_Os01g55560</name>
    <name type="ORF">P0460E08.23</name>
    <name type="ORF">P0512C01.12</name>
</gene>
<feature type="chain" id="PRO_0000191802" description="Probable protein ABIL5">
    <location>
        <begin position="1"/>
        <end position="254"/>
    </location>
</feature>
<feature type="region of interest" description="Disordered" evidence="2">
    <location>
        <begin position="1"/>
        <end position="26"/>
    </location>
</feature>
<accession>Q5JMF2</accession>
<accession>Q0JJ45</accession>
<accession>Q94DS5</accession>